<proteinExistence type="inferred from homology"/>
<keyword id="KW-0067">ATP-binding</keyword>
<keyword id="KW-0997">Cell inner membrane</keyword>
<keyword id="KW-1003">Cell membrane</keyword>
<keyword id="KW-0472">Membrane</keyword>
<keyword id="KW-0547">Nucleotide-binding</keyword>
<keyword id="KW-0762">Sugar transport</keyword>
<keyword id="KW-1278">Translocase</keyword>
<keyword id="KW-0813">Transport</keyword>
<sequence>MAALSLKGVRKSYGGAQYVLHGIDVDIADGEFVVLVGPSGCGKSTLLRMIAGLETVTEGEIAIGGRVVNALEPKDRDIAMVFQNYALYPHMTVAQNMGYGLKIRGVERALIDARVQAAAQILELGPLLARRPRELSGGQRQRVAMGRAIVREPSVFLFDEPLSNLDAKLRVQMRLEIQRLHARLATTSVYVTHDQIEAMTLAQRVIVMNRGYAEQIGAPVDVYEKPATTFVASFIGSPAMNLLHGRLSEDGAAFDVADGPRLPVAGSAGAGRGIAPGREWILGVRPEHMTPQPGEAFATLAVDSCELLGADNLAHGRWGAHDVAVRLPHAMRPTRGETLPVALPARHLHFFDPATGKRAG</sequence>
<gene>
    <name evidence="1" type="primary">ugpC</name>
    <name type="ordered locus">BURPS1710b_3722</name>
</gene>
<accession>Q3JMW7</accession>
<protein>
    <recommendedName>
        <fullName evidence="1">sn-glycerol-3-phosphate import ATP-binding protein UgpC</fullName>
        <ecNumber evidence="1">7.6.2.10</ecNumber>
    </recommendedName>
</protein>
<name>UGPC_BURP1</name>
<feature type="chain" id="PRO_0000289743" description="sn-glycerol-3-phosphate import ATP-binding protein UgpC">
    <location>
        <begin position="1"/>
        <end position="360"/>
    </location>
</feature>
<feature type="domain" description="ABC transporter" evidence="1">
    <location>
        <begin position="4"/>
        <end position="235"/>
    </location>
</feature>
<feature type="binding site" evidence="1">
    <location>
        <begin position="37"/>
        <end position="44"/>
    </location>
    <ligand>
        <name>ATP</name>
        <dbReference type="ChEBI" id="CHEBI:30616"/>
    </ligand>
</feature>
<organism>
    <name type="scientific">Burkholderia pseudomallei (strain 1710b)</name>
    <dbReference type="NCBI Taxonomy" id="320372"/>
    <lineage>
        <taxon>Bacteria</taxon>
        <taxon>Pseudomonadati</taxon>
        <taxon>Pseudomonadota</taxon>
        <taxon>Betaproteobacteria</taxon>
        <taxon>Burkholderiales</taxon>
        <taxon>Burkholderiaceae</taxon>
        <taxon>Burkholderia</taxon>
        <taxon>pseudomallei group</taxon>
    </lineage>
</organism>
<dbReference type="EC" id="7.6.2.10" evidence="1"/>
<dbReference type="EMBL" id="CP000124">
    <property type="protein sequence ID" value="ABA47522.1"/>
    <property type="molecule type" value="Genomic_DNA"/>
</dbReference>
<dbReference type="RefSeq" id="WP_004527898.1">
    <property type="nucleotide sequence ID" value="NC_007434.1"/>
</dbReference>
<dbReference type="SMR" id="Q3JMW7"/>
<dbReference type="EnsemblBacteria" id="ABA47522">
    <property type="protein sequence ID" value="ABA47522"/>
    <property type="gene ID" value="BURPS1710b_3722"/>
</dbReference>
<dbReference type="KEGG" id="bpm:BURPS1710b_3722"/>
<dbReference type="HOGENOM" id="CLU_000604_1_1_4"/>
<dbReference type="Proteomes" id="UP000002700">
    <property type="component" value="Chromosome I"/>
</dbReference>
<dbReference type="GO" id="GO:0055052">
    <property type="term" value="C:ATP-binding cassette (ABC) transporter complex, substrate-binding subunit-containing"/>
    <property type="evidence" value="ECO:0007669"/>
    <property type="project" value="TreeGrafter"/>
</dbReference>
<dbReference type="GO" id="GO:0015430">
    <property type="term" value="F:ABC-type glycerol-3-phosphate transporter activity"/>
    <property type="evidence" value="ECO:0007669"/>
    <property type="project" value="UniProtKB-EC"/>
</dbReference>
<dbReference type="GO" id="GO:0005524">
    <property type="term" value="F:ATP binding"/>
    <property type="evidence" value="ECO:0007669"/>
    <property type="project" value="UniProtKB-KW"/>
</dbReference>
<dbReference type="GO" id="GO:0016887">
    <property type="term" value="F:ATP hydrolysis activity"/>
    <property type="evidence" value="ECO:0007669"/>
    <property type="project" value="InterPro"/>
</dbReference>
<dbReference type="GO" id="GO:0008643">
    <property type="term" value="P:carbohydrate transport"/>
    <property type="evidence" value="ECO:0007669"/>
    <property type="project" value="InterPro"/>
</dbReference>
<dbReference type="GO" id="GO:0001407">
    <property type="term" value="P:glycerophosphodiester transmembrane transport"/>
    <property type="evidence" value="ECO:0007669"/>
    <property type="project" value="TreeGrafter"/>
</dbReference>
<dbReference type="CDD" id="cd03301">
    <property type="entry name" value="ABC_MalK_N"/>
    <property type="match status" value="1"/>
</dbReference>
<dbReference type="FunFam" id="3.40.50.300:FF:000042">
    <property type="entry name" value="Maltose/maltodextrin ABC transporter, ATP-binding protein"/>
    <property type="match status" value="1"/>
</dbReference>
<dbReference type="Gene3D" id="2.40.50.100">
    <property type="match status" value="1"/>
</dbReference>
<dbReference type="Gene3D" id="2.40.50.140">
    <property type="entry name" value="Nucleic acid-binding proteins"/>
    <property type="match status" value="1"/>
</dbReference>
<dbReference type="Gene3D" id="3.40.50.300">
    <property type="entry name" value="P-loop containing nucleotide triphosphate hydrolases"/>
    <property type="match status" value="1"/>
</dbReference>
<dbReference type="InterPro" id="IPR003593">
    <property type="entry name" value="AAA+_ATPase"/>
</dbReference>
<dbReference type="InterPro" id="IPR003439">
    <property type="entry name" value="ABC_transporter-like_ATP-bd"/>
</dbReference>
<dbReference type="InterPro" id="IPR017871">
    <property type="entry name" value="ABC_transporter-like_CS"/>
</dbReference>
<dbReference type="InterPro" id="IPR015855">
    <property type="entry name" value="ABC_transpr_MalK-like"/>
</dbReference>
<dbReference type="InterPro" id="IPR047641">
    <property type="entry name" value="ABC_transpr_MalK/UgpC-like"/>
</dbReference>
<dbReference type="InterPro" id="IPR008995">
    <property type="entry name" value="Mo/tungstate-bd_C_term_dom"/>
</dbReference>
<dbReference type="InterPro" id="IPR012340">
    <property type="entry name" value="NA-bd_OB-fold"/>
</dbReference>
<dbReference type="InterPro" id="IPR040582">
    <property type="entry name" value="OB_MalK-like"/>
</dbReference>
<dbReference type="InterPro" id="IPR027417">
    <property type="entry name" value="P-loop_NTPase"/>
</dbReference>
<dbReference type="NCBIfam" id="NF008653">
    <property type="entry name" value="PRK11650.1"/>
    <property type="match status" value="1"/>
</dbReference>
<dbReference type="PANTHER" id="PTHR43875">
    <property type="entry name" value="MALTODEXTRIN IMPORT ATP-BINDING PROTEIN MSMX"/>
    <property type="match status" value="1"/>
</dbReference>
<dbReference type="PANTHER" id="PTHR43875:SF12">
    <property type="entry name" value="SN-GLYCEROL-3-PHOSPHATE IMPORT ATP-BINDING PROTEIN UGPC"/>
    <property type="match status" value="1"/>
</dbReference>
<dbReference type="Pfam" id="PF00005">
    <property type="entry name" value="ABC_tran"/>
    <property type="match status" value="1"/>
</dbReference>
<dbReference type="Pfam" id="PF17912">
    <property type="entry name" value="OB_MalK"/>
    <property type="match status" value="1"/>
</dbReference>
<dbReference type="SMART" id="SM00382">
    <property type="entry name" value="AAA"/>
    <property type="match status" value="1"/>
</dbReference>
<dbReference type="SUPFAM" id="SSF50331">
    <property type="entry name" value="MOP-like"/>
    <property type="match status" value="1"/>
</dbReference>
<dbReference type="SUPFAM" id="SSF52540">
    <property type="entry name" value="P-loop containing nucleoside triphosphate hydrolases"/>
    <property type="match status" value="1"/>
</dbReference>
<dbReference type="PROSITE" id="PS00211">
    <property type="entry name" value="ABC_TRANSPORTER_1"/>
    <property type="match status" value="1"/>
</dbReference>
<dbReference type="PROSITE" id="PS50893">
    <property type="entry name" value="ABC_TRANSPORTER_2"/>
    <property type="match status" value="1"/>
</dbReference>
<dbReference type="PROSITE" id="PS51315">
    <property type="entry name" value="UGPC"/>
    <property type="match status" value="1"/>
</dbReference>
<reference key="1">
    <citation type="journal article" date="2010" name="Genome Biol. Evol.">
        <title>Continuing evolution of Burkholderia mallei through genome reduction and large-scale rearrangements.</title>
        <authorList>
            <person name="Losada L."/>
            <person name="Ronning C.M."/>
            <person name="DeShazer D."/>
            <person name="Woods D."/>
            <person name="Fedorova N."/>
            <person name="Kim H.S."/>
            <person name="Shabalina S.A."/>
            <person name="Pearson T.R."/>
            <person name="Brinkac L."/>
            <person name="Tan P."/>
            <person name="Nandi T."/>
            <person name="Crabtree J."/>
            <person name="Badger J."/>
            <person name="Beckstrom-Sternberg S."/>
            <person name="Saqib M."/>
            <person name="Schutzer S.E."/>
            <person name="Keim P."/>
            <person name="Nierman W.C."/>
        </authorList>
    </citation>
    <scope>NUCLEOTIDE SEQUENCE [LARGE SCALE GENOMIC DNA]</scope>
    <source>
        <strain>1710b</strain>
    </source>
</reference>
<comment type="function">
    <text evidence="1">Part of the ABC transporter complex UgpBAEC involved in sn-glycerol-3-phosphate (G3P) import. Responsible for energy coupling to the transport system.</text>
</comment>
<comment type="catalytic activity">
    <reaction evidence="1">
        <text>sn-glycerol 3-phosphate(out) + ATP + H2O = sn-glycerol 3-phosphate(in) + ADP + phosphate + H(+)</text>
        <dbReference type="Rhea" id="RHEA:21668"/>
        <dbReference type="ChEBI" id="CHEBI:15377"/>
        <dbReference type="ChEBI" id="CHEBI:15378"/>
        <dbReference type="ChEBI" id="CHEBI:30616"/>
        <dbReference type="ChEBI" id="CHEBI:43474"/>
        <dbReference type="ChEBI" id="CHEBI:57597"/>
        <dbReference type="ChEBI" id="CHEBI:456216"/>
        <dbReference type="EC" id="7.6.2.10"/>
    </reaction>
</comment>
<comment type="subunit">
    <text evidence="1">The complex is composed of two ATP-binding proteins (UgpC), two transmembrane proteins (UgpA and UgpE) and a solute-binding protein (UgpB).</text>
</comment>
<comment type="subcellular location">
    <subcellularLocation>
        <location evidence="1">Cell inner membrane</location>
        <topology evidence="1">Peripheral membrane protein</topology>
    </subcellularLocation>
</comment>
<comment type="similarity">
    <text evidence="1">Belongs to the ABC transporter superfamily. sn-glycerol-3-phosphate importer (TC 3.A.1.1.3) family.</text>
</comment>
<evidence type="ECO:0000255" key="1">
    <source>
        <dbReference type="HAMAP-Rule" id="MF_01727"/>
    </source>
</evidence>